<accession>P0DKQ6</accession>
<accession>S6CQU2</accession>
<comment type="function">
    <text evidence="1">Omega-conotoxins act at presynaptic membranes, they bind and block voltage-gated calcium channels (Cav).</text>
</comment>
<comment type="subcellular location">
    <subcellularLocation>
        <location evidence="4">Secreted</location>
    </subcellularLocation>
</comment>
<comment type="tissue specificity">
    <text evidence="7">Expressed by the venom duct.</text>
</comment>
<comment type="domain">
    <text evidence="2">The presence of a 'disulfide through disulfide knot' structurally defines this protein as a knottin.</text>
</comment>
<comment type="domain">
    <text>The cysteine framework is VI/VII (C-C-CC-C-C).</text>
</comment>
<comment type="mass spectrometry"/>
<comment type="miscellaneous">
    <text evidence="7">Found in injectable (milked) (IV) venom.</text>
</comment>
<comment type="similarity">
    <text evidence="6">Belongs to the conotoxin O1 superfamily.</text>
</comment>
<keyword id="KW-1015">Disulfide bond</keyword>
<keyword id="KW-0960">Knottin</keyword>
<keyword id="KW-0528">Neurotoxin</keyword>
<keyword id="KW-0964">Secreted</keyword>
<keyword id="KW-0732">Signal</keyword>
<keyword id="KW-0800">Toxin</keyword>
<evidence type="ECO:0000250" key="1"/>
<evidence type="ECO:0000250" key="2">
    <source>
        <dbReference type="UniProtKB" id="P05484"/>
    </source>
</evidence>
<evidence type="ECO:0000255" key="3"/>
<evidence type="ECO:0000269" key="4">
    <source>
    </source>
</evidence>
<evidence type="ECO:0000303" key="5">
    <source>
    </source>
</evidence>
<evidence type="ECO:0000305" key="6"/>
<evidence type="ECO:0000305" key="7">
    <source>
    </source>
</evidence>
<name>M7J_CONCN</name>
<sequence>MKLTCVVIVAVLLLTACQLITADDSRGTQKHRSLRSTTKVSKSTSCMKAGSYCRSTTRTCCGYCAYFGKFCIDFPSN</sequence>
<reference key="1">
    <citation type="journal article" date="2012" name="J. Proteomics">
        <title>Large-scale discovery of conopeptides and conoproteins in the injectable venom of a fish-hunting cone snail using a combined proteomic and transcriptomic approach.</title>
        <authorList>
            <person name="Violette A."/>
            <person name="Biass D."/>
            <person name="Dutertre S."/>
            <person name="Koua D."/>
            <person name="Piquemal D."/>
            <person name="Pierrat F."/>
            <person name="Stocklin R."/>
            <person name="Favreau P."/>
        </authorList>
    </citation>
    <scope>NUCLEOTIDE SEQUENCE [MRNA]</scope>
    <scope>MASS SPECTROMETRY</scope>
    <scope>IDENTIFICATION BY MASS SPECTROMETRY</scope>
    <scope>SUBCELLULAR LOCATION</scope>
    <source>
        <tissue>Venom</tissue>
        <tissue>Venom duct</tissue>
    </source>
</reference>
<proteinExistence type="evidence at protein level"/>
<dbReference type="EMBL" id="HE856387">
    <property type="protein sequence ID" value="CCI55500.1"/>
    <property type="molecule type" value="mRNA"/>
</dbReference>
<dbReference type="GO" id="GO:0005576">
    <property type="term" value="C:extracellular region"/>
    <property type="evidence" value="ECO:0007669"/>
    <property type="project" value="UniProtKB-SubCell"/>
</dbReference>
<dbReference type="GO" id="GO:0008200">
    <property type="term" value="F:ion channel inhibitor activity"/>
    <property type="evidence" value="ECO:0007669"/>
    <property type="project" value="InterPro"/>
</dbReference>
<dbReference type="GO" id="GO:0090729">
    <property type="term" value="F:toxin activity"/>
    <property type="evidence" value="ECO:0007669"/>
    <property type="project" value="UniProtKB-KW"/>
</dbReference>
<dbReference type="InterPro" id="IPR004214">
    <property type="entry name" value="Conotoxin"/>
</dbReference>
<dbReference type="InterPro" id="IPR012321">
    <property type="entry name" value="Conotoxin_omega-typ_CS"/>
</dbReference>
<dbReference type="Pfam" id="PF02950">
    <property type="entry name" value="Conotoxin"/>
    <property type="match status" value="1"/>
</dbReference>
<dbReference type="PROSITE" id="PS60004">
    <property type="entry name" value="OMEGA_CONOTOXIN"/>
    <property type="match status" value="1"/>
</dbReference>
<organism>
    <name type="scientific">Conus consors</name>
    <name type="common">Singed cone</name>
    <dbReference type="NCBI Taxonomy" id="101297"/>
    <lineage>
        <taxon>Eukaryota</taxon>
        <taxon>Metazoa</taxon>
        <taxon>Spiralia</taxon>
        <taxon>Lophotrochozoa</taxon>
        <taxon>Mollusca</taxon>
        <taxon>Gastropoda</taxon>
        <taxon>Caenogastropoda</taxon>
        <taxon>Neogastropoda</taxon>
        <taxon>Conoidea</taxon>
        <taxon>Conidae</taxon>
        <taxon>Conus</taxon>
        <taxon>Pionoconus</taxon>
    </lineage>
</organism>
<protein>
    <recommendedName>
        <fullName evidence="5">Omega-conotoxin-like CnVIIJ</fullName>
    </recommendedName>
</protein>
<feature type="signal peptide" evidence="3">
    <location>
        <begin position="1"/>
        <end position="22"/>
    </location>
</feature>
<feature type="propeptide" id="PRO_0000451776" evidence="7">
    <location>
        <begin position="23"/>
        <end position="42"/>
    </location>
</feature>
<feature type="peptide" id="PRO_0000419889" description="Omega-conotoxin-like CnVIIJ" evidence="4">
    <location>
        <begin position="43"/>
        <end position="77"/>
    </location>
</feature>
<feature type="disulfide bond" evidence="2">
    <location>
        <begin position="46"/>
        <end position="61"/>
    </location>
</feature>
<feature type="disulfide bond" evidence="2">
    <location>
        <begin position="53"/>
        <end position="64"/>
    </location>
</feature>
<feature type="disulfide bond" evidence="2">
    <location>
        <begin position="60"/>
        <end position="71"/>
    </location>
</feature>